<evidence type="ECO:0000250" key="1">
    <source>
        <dbReference type="UniProtKB" id="P03886"/>
    </source>
</evidence>
<evidence type="ECO:0000250" key="2">
    <source>
        <dbReference type="UniProtKB" id="P03887"/>
    </source>
</evidence>
<evidence type="ECO:0000255" key="3"/>
<evidence type="ECO:0000305" key="4"/>
<proteinExistence type="inferred from homology"/>
<accession>O03850</accession>
<organism>
    <name type="scientific">Ceratotherium simum</name>
    <name type="common">White rhinoceros</name>
    <name type="synonym">Square-lipped rhinoceros</name>
    <dbReference type="NCBI Taxonomy" id="9807"/>
    <lineage>
        <taxon>Eukaryota</taxon>
        <taxon>Metazoa</taxon>
        <taxon>Chordata</taxon>
        <taxon>Craniata</taxon>
        <taxon>Vertebrata</taxon>
        <taxon>Euteleostomi</taxon>
        <taxon>Mammalia</taxon>
        <taxon>Eutheria</taxon>
        <taxon>Laurasiatheria</taxon>
        <taxon>Perissodactyla</taxon>
        <taxon>Rhinocerotidae</taxon>
        <taxon>Ceratotherium</taxon>
    </lineage>
</organism>
<protein>
    <recommendedName>
        <fullName>NADH-ubiquinone oxidoreductase chain 1</fullName>
        <ecNumber evidence="1">7.1.1.2</ecNumber>
    </recommendedName>
    <alternativeName>
        <fullName>NADH dehydrogenase subunit 1</fullName>
    </alternativeName>
</protein>
<comment type="function">
    <text evidence="1">Core subunit of the mitochondrial membrane respiratory chain NADH dehydrogenase (Complex I) which catalyzes electron transfer from NADH through the respiratory chain, using ubiquinone as an electron acceptor. Essential for the catalytic activity and assembly of complex I.</text>
</comment>
<comment type="catalytic activity">
    <reaction evidence="1">
        <text>a ubiquinone + NADH + 5 H(+)(in) = a ubiquinol + NAD(+) + 4 H(+)(out)</text>
        <dbReference type="Rhea" id="RHEA:29091"/>
        <dbReference type="Rhea" id="RHEA-COMP:9565"/>
        <dbReference type="Rhea" id="RHEA-COMP:9566"/>
        <dbReference type="ChEBI" id="CHEBI:15378"/>
        <dbReference type="ChEBI" id="CHEBI:16389"/>
        <dbReference type="ChEBI" id="CHEBI:17976"/>
        <dbReference type="ChEBI" id="CHEBI:57540"/>
        <dbReference type="ChEBI" id="CHEBI:57945"/>
        <dbReference type="EC" id="7.1.1.2"/>
    </reaction>
</comment>
<comment type="subunit">
    <text evidence="2">Core subunit of respiratory chain NADH dehydrogenase (Complex I) which is composed of 45 different subunits.</text>
</comment>
<comment type="subcellular location">
    <subcellularLocation>
        <location evidence="2">Mitochondrion inner membrane</location>
        <topology evidence="3">Multi-pass membrane protein</topology>
    </subcellularLocation>
</comment>
<comment type="similarity">
    <text evidence="4">Belongs to the complex I subunit 1 family.</text>
</comment>
<geneLocation type="mitochondrion"/>
<reference key="1">
    <citation type="journal article" date="1997" name="Mol. Phylogenet. Evol.">
        <title>The complete mitochondrial DNA sequence of the white rhinoceros, Ceratotherium simum, and comparison with the mtDNA sequence of the Indian rhinoceros, Rhinoceros unicornis.</title>
        <authorList>
            <person name="Xu X."/>
            <person name="Arnason U."/>
        </authorList>
    </citation>
    <scope>NUCLEOTIDE SEQUENCE [GENOMIC DNA]</scope>
</reference>
<keyword id="KW-0249">Electron transport</keyword>
<keyword id="KW-0472">Membrane</keyword>
<keyword id="KW-0496">Mitochondrion</keyword>
<keyword id="KW-0999">Mitochondrion inner membrane</keyword>
<keyword id="KW-0520">NAD</keyword>
<keyword id="KW-0679">Respiratory chain</keyword>
<keyword id="KW-1278">Translocase</keyword>
<keyword id="KW-0812">Transmembrane</keyword>
<keyword id="KW-1133">Transmembrane helix</keyword>
<keyword id="KW-0813">Transport</keyword>
<keyword id="KW-0830">Ubiquinone</keyword>
<name>NU1M_CERSI</name>
<dbReference type="EC" id="7.1.1.2" evidence="1"/>
<dbReference type="EMBL" id="Y07726">
    <property type="protein sequence ID" value="CAA69006.1"/>
    <property type="molecule type" value="Genomic_DNA"/>
</dbReference>
<dbReference type="RefSeq" id="NP_007433.1">
    <property type="nucleotide sequence ID" value="NC_001808.1"/>
</dbReference>
<dbReference type="SMR" id="O03850"/>
<dbReference type="GeneID" id="808099"/>
<dbReference type="CTD" id="4535"/>
<dbReference type="OMA" id="WSGWASN"/>
<dbReference type="GO" id="GO:0005743">
    <property type="term" value="C:mitochondrial inner membrane"/>
    <property type="evidence" value="ECO:0000250"/>
    <property type="project" value="UniProtKB"/>
</dbReference>
<dbReference type="GO" id="GO:0008137">
    <property type="term" value="F:NADH dehydrogenase (ubiquinone) activity"/>
    <property type="evidence" value="ECO:0000250"/>
    <property type="project" value="UniProtKB"/>
</dbReference>
<dbReference type="GO" id="GO:0006120">
    <property type="term" value="P:mitochondrial electron transport, NADH to ubiquinone"/>
    <property type="evidence" value="ECO:0000250"/>
    <property type="project" value="UniProtKB"/>
</dbReference>
<dbReference type="GO" id="GO:0032981">
    <property type="term" value="P:mitochondrial respiratory chain complex I assembly"/>
    <property type="evidence" value="ECO:0000250"/>
    <property type="project" value="UniProtKB"/>
</dbReference>
<dbReference type="HAMAP" id="MF_01350">
    <property type="entry name" value="NDH1_NuoH"/>
    <property type="match status" value="1"/>
</dbReference>
<dbReference type="InterPro" id="IPR001694">
    <property type="entry name" value="NADH_UbQ_OxRdtase_su1/FPO"/>
</dbReference>
<dbReference type="InterPro" id="IPR018086">
    <property type="entry name" value="NADH_UbQ_OxRdtase_su1_CS"/>
</dbReference>
<dbReference type="PANTHER" id="PTHR11432">
    <property type="entry name" value="NADH DEHYDROGENASE SUBUNIT 1"/>
    <property type="match status" value="1"/>
</dbReference>
<dbReference type="PANTHER" id="PTHR11432:SF3">
    <property type="entry name" value="NADH-UBIQUINONE OXIDOREDUCTASE CHAIN 1"/>
    <property type="match status" value="1"/>
</dbReference>
<dbReference type="Pfam" id="PF00146">
    <property type="entry name" value="NADHdh"/>
    <property type="match status" value="1"/>
</dbReference>
<dbReference type="PROSITE" id="PS00667">
    <property type="entry name" value="COMPLEX1_ND1_1"/>
    <property type="match status" value="1"/>
</dbReference>
<dbReference type="PROSITE" id="PS00668">
    <property type="entry name" value="COMPLEX1_ND1_2"/>
    <property type="match status" value="1"/>
</dbReference>
<sequence length="318" mass="35688">MFTINILLLVIPILLAVAFLTLVERKVLGYMQLRKGPNIVGPYGLLQPIADAIKLFTKEPLQPSTSSTTMFIIAPILALTLALTMWIPLPMPHPLINMNLGVLFMLAMSSLAVYSILWSGWASNSKYALIGALRAVAQTISYEVTLAIILLSVLLMNGSFTLSTLITTQEHLWLIFPSWPLAMMWFISTLAETNRAPFDLAEGESELVSGFNVEYAAGPFALFFMAEYANIIMMNAFTTILFLGAFHNPHMPELYTINFTTKTLLLTTSFLWIRASYPRFRYDQLMHLLWKNFLPLTLALCMWHVSLPITTSSIPPQT</sequence>
<gene>
    <name type="primary">MT-ND1</name>
    <name type="synonym">MTND1</name>
    <name type="synonym">NADH1</name>
    <name type="synonym">ND1</name>
</gene>
<feature type="chain" id="PRO_0000117365" description="NADH-ubiquinone oxidoreductase chain 1">
    <location>
        <begin position="1"/>
        <end position="318"/>
    </location>
</feature>
<feature type="transmembrane region" description="Helical" evidence="3">
    <location>
        <begin position="2"/>
        <end position="22"/>
    </location>
</feature>
<feature type="transmembrane region" description="Helical" evidence="3">
    <location>
        <begin position="70"/>
        <end position="90"/>
    </location>
</feature>
<feature type="transmembrane region" description="Helical" evidence="3">
    <location>
        <begin position="100"/>
        <end position="120"/>
    </location>
</feature>
<feature type="transmembrane region" description="Helical" evidence="3">
    <location>
        <begin position="146"/>
        <end position="166"/>
    </location>
</feature>
<feature type="transmembrane region" description="Helical" evidence="3">
    <location>
        <begin position="171"/>
        <end position="191"/>
    </location>
</feature>
<feature type="transmembrane region" description="Helical" evidence="3">
    <location>
        <begin position="222"/>
        <end position="242"/>
    </location>
</feature>
<feature type="transmembrane region" description="Helical" evidence="3">
    <location>
        <begin position="254"/>
        <end position="276"/>
    </location>
</feature>
<feature type="transmembrane region" description="Helical" evidence="3">
    <location>
        <begin position="294"/>
        <end position="314"/>
    </location>
</feature>